<feature type="chain" id="PRO_0000229204" description="tRNA (guanine-N(7)-)-methyltransferase">
    <location>
        <begin position="1"/>
        <end position="213"/>
    </location>
</feature>
<feature type="active site" evidence="1">
    <location>
        <position position="118"/>
    </location>
</feature>
<feature type="binding site" evidence="2">
    <location>
        <position position="40"/>
    </location>
    <ligand>
        <name>S-adenosyl-L-methionine</name>
        <dbReference type="ChEBI" id="CHEBI:59789"/>
    </ligand>
</feature>
<feature type="binding site" evidence="2">
    <location>
        <position position="65"/>
    </location>
    <ligand>
        <name>S-adenosyl-L-methionine</name>
        <dbReference type="ChEBI" id="CHEBI:59789"/>
    </ligand>
</feature>
<feature type="binding site" evidence="2">
    <location>
        <position position="92"/>
    </location>
    <ligand>
        <name>S-adenosyl-L-methionine</name>
        <dbReference type="ChEBI" id="CHEBI:59789"/>
    </ligand>
</feature>
<feature type="binding site" evidence="2">
    <location>
        <position position="118"/>
    </location>
    <ligand>
        <name>S-adenosyl-L-methionine</name>
        <dbReference type="ChEBI" id="CHEBI:59789"/>
    </ligand>
</feature>
<feature type="binding site" evidence="2">
    <location>
        <position position="122"/>
    </location>
    <ligand>
        <name>substrate</name>
    </ligand>
</feature>
<feature type="binding site" evidence="2">
    <location>
        <position position="154"/>
    </location>
    <ligand>
        <name>substrate</name>
    </ligand>
</feature>
<name>TRMB_SYNP6</name>
<sequence>MARVRVRQHVNPLSQKFQVVTTWPDWQQVYADCDRPLHLDIGCARGRFLLAMATAQPEWNYLGLEIREPLVDEANAIARERELTNLYYHFSNANLDLEPLLRSLPTGILQRVSIQFPDPWFKKRHQKRRVVQPELVQALATALPAGAEVFLQSDVLEVQAEMCEHFAAEPRFQRTCLDWLPENPLPVPTEREIAVQNKQLPVYRALFIRQPAD</sequence>
<proteinExistence type="inferred from homology"/>
<reference key="1">
    <citation type="journal article" date="2007" name="Photosyn. Res.">
        <title>Complete nucleotide sequence of the freshwater unicellular cyanobacterium Synechococcus elongatus PCC 6301 chromosome: gene content and organization.</title>
        <authorList>
            <person name="Sugita C."/>
            <person name="Ogata K."/>
            <person name="Shikata M."/>
            <person name="Jikuya H."/>
            <person name="Takano J."/>
            <person name="Furumichi M."/>
            <person name="Kanehisa M."/>
            <person name="Omata T."/>
            <person name="Sugiura M."/>
            <person name="Sugita M."/>
        </authorList>
    </citation>
    <scope>NUCLEOTIDE SEQUENCE [LARGE SCALE GENOMIC DNA]</scope>
    <source>
        <strain>ATCC 27144 / PCC 6301 / SAUG 1402/1</strain>
    </source>
</reference>
<comment type="function">
    <text evidence="2">Catalyzes the formation of N(7)-methylguanine at position 46 (m7G46) in tRNA.</text>
</comment>
<comment type="catalytic activity">
    <reaction evidence="2">
        <text>guanosine(46) in tRNA + S-adenosyl-L-methionine = N(7)-methylguanosine(46) in tRNA + S-adenosyl-L-homocysteine</text>
        <dbReference type="Rhea" id="RHEA:42708"/>
        <dbReference type="Rhea" id="RHEA-COMP:10188"/>
        <dbReference type="Rhea" id="RHEA-COMP:10189"/>
        <dbReference type="ChEBI" id="CHEBI:57856"/>
        <dbReference type="ChEBI" id="CHEBI:59789"/>
        <dbReference type="ChEBI" id="CHEBI:74269"/>
        <dbReference type="ChEBI" id="CHEBI:74480"/>
        <dbReference type="EC" id="2.1.1.33"/>
    </reaction>
</comment>
<comment type="pathway">
    <text evidence="2">tRNA modification; N(7)-methylguanine-tRNA biosynthesis.</text>
</comment>
<comment type="similarity">
    <text evidence="2">Belongs to the class I-like SAM-binding methyltransferase superfamily. TrmB family.</text>
</comment>
<keyword id="KW-0489">Methyltransferase</keyword>
<keyword id="KW-0949">S-adenosyl-L-methionine</keyword>
<keyword id="KW-0808">Transferase</keyword>
<keyword id="KW-0819">tRNA processing</keyword>
<accession>Q5N2X5</accession>
<gene>
    <name evidence="2" type="primary">trmB</name>
    <name type="ordered locus">syc1155_d</name>
</gene>
<evidence type="ECO:0000250" key="1"/>
<evidence type="ECO:0000255" key="2">
    <source>
        <dbReference type="HAMAP-Rule" id="MF_01057"/>
    </source>
</evidence>
<organism>
    <name type="scientific">Synechococcus sp. (strain ATCC 27144 / PCC 6301 / SAUG 1402/1)</name>
    <name type="common">Anacystis nidulans</name>
    <dbReference type="NCBI Taxonomy" id="269084"/>
    <lineage>
        <taxon>Bacteria</taxon>
        <taxon>Bacillati</taxon>
        <taxon>Cyanobacteriota</taxon>
        <taxon>Cyanophyceae</taxon>
        <taxon>Synechococcales</taxon>
        <taxon>Synechococcaceae</taxon>
        <taxon>Synechococcus</taxon>
    </lineage>
</organism>
<dbReference type="EC" id="2.1.1.33" evidence="2"/>
<dbReference type="EMBL" id="AP008231">
    <property type="protein sequence ID" value="BAD79345.1"/>
    <property type="molecule type" value="Genomic_DNA"/>
</dbReference>
<dbReference type="RefSeq" id="WP_011243467.1">
    <property type="nucleotide sequence ID" value="NZ_CP085785.1"/>
</dbReference>
<dbReference type="SMR" id="Q5N2X5"/>
<dbReference type="GeneID" id="72429176"/>
<dbReference type="KEGG" id="syc:syc1155_d"/>
<dbReference type="eggNOG" id="COG0220">
    <property type="taxonomic scope" value="Bacteria"/>
</dbReference>
<dbReference type="UniPathway" id="UPA00989"/>
<dbReference type="Proteomes" id="UP000001175">
    <property type="component" value="Chromosome"/>
</dbReference>
<dbReference type="GO" id="GO:0043527">
    <property type="term" value="C:tRNA methyltransferase complex"/>
    <property type="evidence" value="ECO:0007669"/>
    <property type="project" value="TreeGrafter"/>
</dbReference>
<dbReference type="GO" id="GO:0008176">
    <property type="term" value="F:tRNA (guanine(46)-N7)-methyltransferase activity"/>
    <property type="evidence" value="ECO:0007669"/>
    <property type="project" value="UniProtKB-UniRule"/>
</dbReference>
<dbReference type="CDD" id="cd02440">
    <property type="entry name" value="AdoMet_MTases"/>
    <property type="match status" value="1"/>
</dbReference>
<dbReference type="Gene3D" id="3.40.50.150">
    <property type="entry name" value="Vaccinia Virus protein VP39"/>
    <property type="match status" value="1"/>
</dbReference>
<dbReference type="HAMAP" id="MF_01057">
    <property type="entry name" value="tRNA_methyltr_TrmB"/>
    <property type="match status" value="1"/>
</dbReference>
<dbReference type="InterPro" id="IPR029063">
    <property type="entry name" value="SAM-dependent_MTases_sf"/>
</dbReference>
<dbReference type="InterPro" id="IPR003358">
    <property type="entry name" value="tRNA_(Gua-N-7)_MeTrfase_Trmb"/>
</dbReference>
<dbReference type="InterPro" id="IPR055361">
    <property type="entry name" value="tRNA_methyltr_TrmB_bact"/>
</dbReference>
<dbReference type="NCBIfam" id="TIGR00091">
    <property type="entry name" value="tRNA (guanosine(46)-N7)-methyltransferase TrmB"/>
    <property type="match status" value="1"/>
</dbReference>
<dbReference type="PANTHER" id="PTHR23417">
    <property type="entry name" value="3-DEOXY-D-MANNO-OCTULOSONIC-ACID TRANSFERASE/TRNA GUANINE-N 7 - -METHYLTRANSFERASE"/>
    <property type="match status" value="1"/>
</dbReference>
<dbReference type="PANTHER" id="PTHR23417:SF21">
    <property type="entry name" value="TRNA (GUANINE-N(7)-)-METHYLTRANSFERASE"/>
    <property type="match status" value="1"/>
</dbReference>
<dbReference type="Pfam" id="PF02390">
    <property type="entry name" value="Methyltransf_4"/>
    <property type="match status" value="1"/>
</dbReference>
<dbReference type="SUPFAM" id="SSF53335">
    <property type="entry name" value="S-adenosyl-L-methionine-dependent methyltransferases"/>
    <property type="match status" value="1"/>
</dbReference>
<dbReference type="PROSITE" id="PS51625">
    <property type="entry name" value="SAM_MT_TRMB"/>
    <property type="match status" value="1"/>
</dbReference>
<protein>
    <recommendedName>
        <fullName evidence="2">tRNA (guanine-N(7)-)-methyltransferase</fullName>
        <ecNumber evidence="2">2.1.1.33</ecNumber>
    </recommendedName>
    <alternativeName>
        <fullName evidence="2">tRNA (guanine(46)-N(7))-methyltransferase</fullName>
    </alternativeName>
    <alternativeName>
        <fullName evidence="2">tRNA(m7G46)-methyltransferase</fullName>
    </alternativeName>
</protein>